<gene>
    <name evidence="1" type="primary">cysS</name>
    <name type="ordered locus">LHK_01405</name>
</gene>
<feature type="chain" id="PRO_1000199073" description="Cysteine--tRNA ligase">
    <location>
        <begin position="1"/>
        <end position="457"/>
    </location>
</feature>
<feature type="short sequence motif" description="'HIGH' region">
    <location>
        <begin position="30"/>
        <end position="40"/>
    </location>
</feature>
<feature type="short sequence motif" description="'KMSKS' region">
    <location>
        <begin position="266"/>
        <end position="270"/>
    </location>
</feature>
<feature type="binding site" evidence="1">
    <location>
        <position position="28"/>
    </location>
    <ligand>
        <name>Zn(2+)</name>
        <dbReference type="ChEBI" id="CHEBI:29105"/>
    </ligand>
</feature>
<feature type="binding site" evidence="1">
    <location>
        <position position="209"/>
    </location>
    <ligand>
        <name>Zn(2+)</name>
        <dbReference type="ChEBI" id="CHEBI:29105"/>
    </ligand>
</feature>
<feature type="binding site" evidence="1">
    <location>
        <position position="234"/>
    </location>
    <ligand>
        <name>Zn(2+)</name>
        <dbReference type="ChEBI" id="CHEBI:29105"/>
    </ligand>
</feature>
<feature type="binding site" evidence="1">
    <location>
        <position position="238"/>
    </location>
    <ligand>
        <name>Zn(2+)</name>
        <dbReference type="ChEBI" id="CHEBI:29105"/>
    </ligand>
</feature>
<feature type="binding site" evidence="1">
    <location>
        <position position="269"/>
    </location>
    <ligand>
        <name>ATP</name>
        <dbReference type="ChEBI" id="CHEBI:30616"/>
    </ligand>
</feature>
<name>SYC_LARHH</name>
<proteinExistence type="inferred from homology"/>
<comment type="catalytic activity">
    <reaction evidence="1">
        <text>tRNA(Cys) + L-cysteine + ATP = L-cysteinyl-tRNA(Cys) + AMP + diphosphate</text>
        <dbReference type="Rhea" id="RHEA:17773"/>
        <dbReference type="Rhea" id="RHEA-COMP:9661"/>
        <dbReference type="Rhea" id="RHEA-COMP:9679"/>
        <dbReference type="ChEBI" id="CHEBI:30616"/>
        <dbReference type="ChEBI" id="CHEBI:33019"/>
        <dbReference type="ChEBI" id="CHEBI:35235"/>
        <dbReference type="ChEBI" id="CHEBI:78442"/>
        <dbReference type="ChEBI" id="CHEBI:78517"/>
        <dbReference type="ChEBI" id="CHEBI:456215"/>
        <dbReference type="EC" id="6.1.1.16"/>
    </reaction>
</comment>
<comment type="cofactor">
    <cofactor evidence="1">
        <name>Zn(2+)</name>
        <dbReference type="ChEBI" id="CHEBI:29105"/>
    </cofactor>
    <text evidence="1">Binds 1 zinc ion per subunit.</text>
</comment>
<comment type="subunit">
    <text evidence="1">Monomer.</text>
</comment>
<comment type="subcellular location">
    <subcellularLocation>
        <location evidence="1">Cytoplasm</location>
    </subcellularLocation>
</comment>
<comment type="similarity">
    <text evidence="1">Belongs to the class-I aminoacyl-tRNA synthetase family.</text>
</comment>
<evidence type="ECO:0000255" key="1">
    <source>
        <dbReference type="HAMAP-Rule" id="MF_00041"/>
    </source>
</evidence>
<keyword id="KW-0030">Aminoacyl-tRNA synthetase</keyword>
<keyword id="KW-0067">ATP-binding</keyword>
<keyword id="KW-0963">Cytoplasm</keyword>
<keyword id="KW-0436">Ligase</keyword>
<keyword id="KW-0479">Metal-binding</keyword>
<keyword id="KW-0547">Nucleotide-binding</keyword>
<keyword id="KW-0648">Protein biosynthesis</keyword>
<keyword id="KW-1185">Reference proteome</keyword>
<keyword id="KW-0862">Zinc</keyword>
<sequence length="457" mass="51440">MLHLYNTLSRQKERFQPIQPGKVNMYVCGMTVYDYCHLGHARVMVVFDMVARWLRASGYDLTYVRNITDIDDKIIRRAAENGEPINVLTQRFIDAMDEDAAALGVQKPNFEPRATQFVPDMISMIEELIGKGRAYAAPNGDVYYAVREFAGYGQLSGKSLDDLRAGERVDVDPNKRDPMDFVLWKAAKPGEPAWPSPWGQGRPGWHIECSAMNEHYFGPHFDIHGGGADLQFPHHENEIAQSEGAHDCKFVNYWMHNGFIRVDNEKMSKSLGNFFTIREVLEKYDAEVVRFFILRAHYRSPLNYSDAHLEDARSALSRLYTALKNVPAADVALDWEANDYARRFRAAMDDDFNTVEAVAVLFELAGEANKSRSAELAGWLKTLGGVLGLLQRDPVDFLQGGSLEGEISADEVEQLIAARKAARAGKDWAESDRIRDELIARGIVLEDGAGGTTWRRA</sequence>
<accession>C1D7F5</accession>
<organism>
    <name type="scientific">Laribacter hongkongensis (strain HLHK9)</name>
    <dbReference type="NCBI Taxonomy" id="557598"/>
    <lineage>
        <taxon>Bacteria</taxon>
        <taxon>Pseudomonadati</taxon>
        <taxon>Pseudomonadota</taxon>
        <taxon>Betaproteobacteria</taxon>
        <taxon>Neisseriales</taxon>
        <taxon>Aquaspirillaceae</taxon>
        <taxon>Laribacter</taxon>
    </lineage>
</organism>
<dbReference type="EC" id="6.1.1.16" evidence="1"/>
<dbReference type="EMBL" id="CP001154">
    <property type="protein sequence ID" value="ACO74395.1"/>
    <property type="molecule type" value="Genomic_DNA"/>
</dbReference>
<dbReference type="RefSeq" id="WP_012696881.1">
    <property type="nucleotide sequence ID" value="NC_012559.1"/>
</dbReference>
<dbReference type="SMR" id="C1D7F5"/>
<dbReference type="STRING" id="557598.LHK_01405"/>
<dbReference type="GeneID" id="75109819"/>
<dbReference type="KEGG" id="lhk:LHK_01405"/>
<dbReference type="eggNOG" id="COG0215">
    <property type="taxonomic scope" value="Bacteria"/>
</dbReference>
<dbReference type="HOGENOM" id="CLU_013528_0_1_4"/>
<dbReference type="Proteomes" id="UP000002010">
    <property type="component" value="Chromosome"/>
</dbReference>
<dbReference type="GO" id="GO:0005829">
    <property type="term" value="C:cytosol"/>
    <property type="evidence" value="ECO:0007669"/>
    <property type="project" value="TreeGrafter"/>
</dbReference>
<dbReference type="GO" id="GO:0005524">
    <property type="term" value="F:ATP binding"/>
    <property type="evidence" value="ECO:0007669"/>
    <property type="project" value="UniProtKB-UniRule"/>
</dbReference>
<dbReference type="GO" id="GO:0004817">
    <property type="term" value="F:cysteine-tRNA ligase activity"/>
    <property type="evidence" value="ECO:0007669"/>
    <property type="project" value="UniProtKB-UniRule"/>
</dbReference>
<dbReference type="GO" id="GO:0008270">
    <property type="term" value="F:zinc ion binding"/>
    <property type="evidence" value="ECO:0007669"/>
    <property type="project" value="UniProtKB-UniRule"/>
</dbReference>
<dbReference type="GO" id="GO:0006423">
    <property type="term" value="P:cysteinyl-tRNA aminoacylation"/>
    <property type="evidence" value="ECO:0007669"/>
    <property type="project" value="UniProtKB-UniRule"/>
</dbReference>
<dbReference type="CDD" id="cd07963">
    <property type="entry name" value="Anticodon_Ia_Cys"/>
    <property type="match status" value="1"/>
</dbReference>
<dbReference type="CDD" id="cd00672">
    <property type="entry name" value="CysRS_core"/>
    <property type="match status" value="1"/>
</dbReference>
<dbReference type="FunFam" id="3.40.50.620:FF:000009">
    <property type="entry name" value="Cysteine--tRNA ligase"/>
    <property type="match status" value="1"/>
</dbReference>
<dbReference type="Gene3D" id="1.20.120.1910">
    <property type="entry name" value="Cysteine-tRNA ligase, C-terminal anti-codon recognition domain"/>
    <property type="match status" value="1"/>
</dbReference>
<dbReference type="Gene3D" id="3.40.50.620">
    <property type="entry name" value="HUPs"/>
    <property type="match status" value="1"/>
</dbReference>
<dbReference type="HAMAP" id="MF_00041">
    <property type="entry name" value="Cys_tRNA_synth"/>
    <property type="match status" value="1"/>
</dbReference>
<dbReference type="InterPro" id="IPR015803">
    <property type="entry name" value="Cys-tRNA-ligase"/>
</dbReference>
<dbReference type="InterPro" id="IPR015273">
    <property type="entry name" value="Cys-tRNA-synt_Ia_DALR"/>
</dbReference>
<dbReference type="InterPro" id="IPR024909">
    <property type="entry name" value="Cys-tRNA/MSH_ligase"/>
</dbReference>
<dbReference type="InterPro" id="IPR056411">
    <property type="entry name" value="CysS_C"/>
</dbReference>
<dbReference type="InterPro" id="IPR014729">
    <property type="entry name" value="Rossmann-like_a/b/a_fold"/>
</dbReference>
<dbReference type="InterPro" id="IPR032678">
    <property type="entry name" value="tRNA-synt_1_cat_dom"/>
</dbReference>
<dbReference type="InterPro" id="IPR009080">
    <property type="entry name" value="tRNAsynth_Ia_anticodon-bd"/>
</dbReference>
<dbReference type="NCBIfam" id="TIGR00435">
    <property type="entry name" value="cysS"/>
    <property type="match status" value="1"/>
</dbReference>
<dbReference type="PANTHER" id="PTHR10890:SF3">
    <property type="entry name" value="CYSTEINE--TRNA LIGASE, CYTOPLASMIC"/>
    <property type="match status" value="1"/>
</dbReference>
<dbReference type="PANTHER" id="PTHR10890">
    <property type="entry name" value="CYSTEINYL-TRNA SYNTHETASE"/>
    <property type="match status" value="1"/>
</dbReference>
<dbReference type="Pfam" id="PF23493">
    <property type="entry name" value="CysS_C"/>
    <property type="match status" value="1"/>
</dbReference>
<dbReference type="Pfam" id="PF09190">
    <property type="entry name" value="DALR_2"/>
    <property type="match status" value="1"/>
</dbReference>
<dbReference type="Pfam" id="PF01406">
    <property type="entry name" value="tRNA-synt_1e"/>
    <property type="match status" value="1"/>
</dbReference>
<dbReference type="PRINTS" id="PR00983">
    <property type="entry name" value="TRNASYNTHCYS"/>
</dbReference>
<dbReference type="SMART" id="SM00840">
    <property type="entry name" value="DALR_2"/>
    <property type="match status" value="1"/>
</dbReference>
<dbReference type="SUPFAM" id="SSF47323">
    <property type="entry name" value="Anticodon-binding domain of a subclass of class I aminoacyl-tRNA synthetases"/>
    <property type="match status" value="1"/>
</dbReference>
<dbReference type="SUPFAM" id="SSF52374">
    <property type="entry name" value="Nucleotidylyl transferase"/>
    <property type="match status" value="1"/>
</dbReference>
<protein>
    <recommendedName>
        <fullName evidence="1">Cysteine--tRNA ligase</fullName>
        <ecNumber evidence="1">6.1.1.16</ecNumber>
    </recommendedName>
    <alternativeName>
        <fullName evidence="1">Cysteinyl-tRNA synthetase</fullName>
        <shortName evidence="1">CysRS</shortName>
    </alternativeName>
</protein>
<reference key="1">
    <citation type="journal article" date="2009" name="PLoS Genet.">
        <title>The complete genome and proteome of Laribacter hongkongensis reveal potential mechanisms for adaptations to different temperatures and habitats.</title>
        <authorList>
            <person name="Woo P.C.Y."/>
            <person name="Lau S.K.P."/>
            <person name="Tse H."/>
            <person name="Teng J.L.L."/>
            <person name="Curreem S.O."/>
            <person name="Tsang A.K.L."/>
            <person name="Fan R.Y.Y."/>
            <person name="Wong G.K.M."/>
            <person name="Huang Y."/>
            <person name="Loman N.J."/>
            <person name="Snyder L.A.S."/>
            <person name="Cai J.J."/>
            <person name="Huang J.-D."/>
            <person name="Mak W."/>
            <person name="Pallen M.J."/>
            <person name="Lok S."/>
            <person name="Yuen K.-Y."/>
        </authorList>
    </citation>
    <scope>NUCLEOTIDE SEQUENCE [LARGE SCALE GENOMIC DNA]</scope>
    <source>
        <strain>HLHK9</strain>
    </source>
</reference>